<accession>Q8EDL3</accession>
<keyword id="KW-0963">Cytoplasm</keyword>
<keyword id="KW-0224">Dipeptidase</keyword>
<keyword id="KW-0378">Hydrolase</keyword>
<keyword id="KW-0645">Protease</keyword>
<keyword id="KW-1185">Reference proteome</keyword>
<keyword id="KW-0720">Serine protease</keyword>
<proteinExistence type="inferred from homology"/>
<protein>
    <recommendedName>
        <fullName evidence="1">Peptidase E</fullName>
        <ecNumber evidence="1">3.4.13.21</ecNumber>
    </recommendedName>
    <alternativeName>
        <fullName evidence="1">Alpha-aspartyl dipeptidase</fullName>
    </alternativeName>
    <alternativeName>
        <fullName evidence="1">Asp-specific dipeptidase</fullName>
    </alternativeName>
    <alternativeName>
        <fullName evidence="1">Dipeptidase E</fullName>
    </alternativeName>
</protein>
<dbReference type="EC" id="3.4.13.21" evidence="1"/>
<dbReference type="EMBL" id="AE014299">
    <property type="protein sequence ID" value="AAN55758.1"/>
    <property type="molecule type" value="Genomic_DNA"/>
</dbReference>
<dbReference type="RefSeq" id="NP_718314.1">
    <property type="nucleotide sequence ID" value="NC_004347.2"/>
</dbReference>
<dbReference type="RefSeq" id="WP_011072673.1">
    <property type="nucleotide sequence ID" value="NC_004347.2"/>
</dbReference>
<dbReference type="SMR" id="Q8EDL3"/>
<dbReference type="STRING" id="211586.SO_2730"/>
<dbReference type="MEROPS" id="S51.001"/>
<dbReference type="PaxDb" id="211586-SO_2730"/>
<dbReference type="KEGG" id="son:SO_2730"/>
<dbReference type="PATRIC" id="fig|211586.12.peg.2630"/>
<dbReference type="eggNOG" id="COG3340">
    <property type="taxonomic scope" value="Bacteria"/>
</dbReference>
<dbReference type="HOGENOM" id="CLU_071689_0_0_6"/>
<dbReference type="OrthoDB" id="3373764at2"/>
<dbReference type="PhylomeDB" id="Q8EDL3"/>
<dbReference type="BioCyc" id="SONE211586:G1GMP-2511-MONOMER"/>
<dbReference type="Proteomes" id="UP000008186">
    <property type="component" value="Chromosome"/>
</dbReference>
<dbReference type="GO" id="GO:0005737">
    <property type="term" value="C:cytoplasm"/>
    <property type="evidence" value="ECO:0007669"/>
    <property type="project" value="UniProtKB-SubCell"/>
</dbReference>
<dbReference type="GO" id="GO:0016805">
    <property type="term" value="F:dipeptidase activity"/>
    <property type="evidence" value="ECO:0007669"/>
    <property type="project" value="UniProtKB-UniRule"/>
</dbReference>
<dbReference type="GO" id="GO:0008236">
    <property type="term" value="F:serine-type peptidase activity"/>
    <property type="evidence" value="ECO:0007669"/>
    <property type="project" value="UniProtKB-KW"/>
</dbReference>
<dbReference type="GO" id="GO:0006508">
    <property type="term" value="P:proteolysis"/>
    <property type="evidence" value="ECO:0007669"/>
    <property type="project" value="UniProtKB-UniRule"/>
</dbReference>
<dbReference type="CDD" id="cd03146">
    <property type="entry name" value="GAT1_Peptidase_E"/>
    <property type="match status" value="1"/>
</dbReference>
<dbReference type="FunFam" id="3.40.50.880:FF:000007">
    <property type="entry name" value="Peptidase E"/>
    <property type="match status" value="1"/>
</dbReference>
<dbReference type="Gene3D" id="3.40.50.880">
    <property type="match status" value="1"/>
</dbReference>
<dbReference type="HAMAP" id="MF_00510">
    <property type="entry name" value="Peptidase_E"/>
    <property type="match status" value="1"/>
</dbReference>
<dbReference type="InterPro" id="IPR029062">
    <property type="entry name" value="Class_I_gatase-like"/>
</dbReference>
<dbReference type="InterPro" id="IPR005320">
    <property type="entry name" value="Peptidase_S51"/>
</dbReference>
<dbReference type="InterPro" id="IPR023172">
    <property type="entry name" value="Peptidase_S51_dipeptidase-E"/>
</dbReference>
<dbReference type="NCBIfam" id="NF003642">
    <property type="entry name" value="PRK05282.1"/>
    <property type="match status" value="1"/>
</dbReference>
<dbReference type="PANTHER" id="PTHR20842:SF0">
    <property type="entry name" value="ALPHA-ASPARTYL DIPEPTIDASE"/>
    <property type="match status" value="1"/>
</dbReference>
<dbReference type="PANTHER" id="PTHR20842">
    <property type="entry name" value="PROTEASE S51 ALPHA-ASPARTYL DIPEPTIDASE"/>
    <property type="match status" value="1"/>
</dbReference>
<dbReference type="Pfam" id="PF03575">
    <property type="entry name" value="Peptidase_S51"/>
    <property type="match status" value="1"/>
</dbReference>
<dbReference type="SUPFAM" id="SSF52317">
    <property type="entry name" value="Class I glutamine amidotransferase-like"/>
    <property type="match status" value="1"/>
</dbReference>
<comment type="function">
    <text evidence="1">Hydrolyzes dipeptides containing N-terminal aspartate residues. May play a role in allowing the cell to use peptide aspartate to spare carbon otherwise required for the synthesis of the aspartate family of amino acids.</text>
</comment>
<comment type="catalytic activity">
    <reaction evidence="1">
        <text>Dipeptidase E catalyzes the hydrolysis of dipeptides Asp-|-Xaa. It does not act on peptides with N-terminal Glu, Asn or Gln, nor does it cleave isoaspartyl peptides.</text>
        <dbReference type="EC" id="3.4.13.21"/>
    </reaction>
</comment>
<comment type="subcellular location">
    <subcellularLocation>
        <location evidence="1">Cytoplasm</location>
    </subcellularLocation>
</comment>
<comment type="similarity">
    <text evidence="1">Belongs to the peptidase S51 family.</text>
</comment>
<reference key="1">
    <citation type="journal article" date="2002" name="Nat. Biotechnol.">
        <title>Genome sequence of the dissimilatory metal ion-reducing bacterium Shewanella oneidensis.</title>
        <authorList>
            <person name="Heidelberg J.F."/>
            <person name="Paulsen I.T."/>
            <person name="Nelson K.E."/>
            <person name="Gaidos E.J."/>
            <person name="Nelson W.C."/>
            <person name="Read T.D."/>
            <person name="Eisen J.A."/>
            <person name="Seshadri R."/>
            <person name="Ward N.L."/>
            <person name="Methe B.A."/>
            <person name="Clayton R.A."/>
            <person name="Meyer T."/>
            <person name="Tsapin A."/>
            <person name="Scott J."/>
            <person name="Beanan M.J."/>
            <person name="Brinkac L.M."/>
            <person name="Daugherty S.C."/>
            <person name="DeBoy R.T."/>
            <person name="Dodson R.J."/>
            <person name="Durkin A.S."/>
            <person name="Haft D.H."/>
            <person name="Kolonay J.F."/>
            <person name="Madupu R."/>
            <person name="Peterson J.D."/>
            <person name="Umayam L.A."/>
            <person name="White O."/>
            <person name="Wolf A.M."/>
            <person name="Vamathevan J.J."/>
            <person name="Weidman J.F."/>
            <person name="Impraim M."/>
            <person name="Lee K."/>
            <person name="Berry K.J."/>
            <person name="Lee C."/>
            <person name="Mueller J."/>
            <person name="Khouri H.M."/>
            <person name="Gill J."/>
            <person name="Utterback T.R."/>
            <person name="McDonald L.A."/>
            <person name="Feldblyum T.V."/>
            <person name="Smith H.O."/>
            <person name="Venter J.C."/>
            <person name="Nealson K.H."/>
            <person name="Fraser C.M."/>
        </authorList>
    </citation>
    <scope>NUCLEOTIDE SEQUENCE [LARGE SCALE GENOMIC DNA]</scope>
    <source>
        <strain>ATCC 700550 / JCM 31522 / CIP 106686 / LMG 19005 / NCIMB 14063 / MR-1</strain>
    </source>
</reference>
<organism>
    <name type="scientific">Shewanella oneidensis (strain ATCC 700550 / JCM 31522 / CIP 106686 / LMG 19005 / NCIMB 14063 / MR-1)</name>
    <dbReference type="NCBI Taxonomy" id="211586"/>
    <lineage>
        <taxon>Bacteria</taxon>
        <taxon>Pseudomonadati</taxon>
        <taxon>Pseudomonadota</taxon>
        <taxon>Gammaproteobacteria</taxon>
        <taxon>Alteromonadales</taxon>
        <taxon>Shewanellaceae</taxon>
        <taxon>Shewanella</taxon>
    </lineage>
</organism>
<feature type="chain" id="PRO_0000209962" description="Peptidase E">
    <location>
        <begin position="1"/>
        <end position="236"/>
    </location>
</feature>
<feature type="active site" description="Charge relay system" evidence="1">
    <location>
        <position position="122"/>
    </location>
</feature>
<feature type="active site" description="Charge relay system" evidence="1">
    <location>
        <position position="137"/>
    </location>
</feature>
<feature type="active site" description="Charge relay system" evidence="1">
    <location>
        <position position="159"/>
    </location>
</feature>
<evidence type="ECO:0000255" key="1">
    <source>
        <dbReference type="HAMAP-Rule" id="MF_00510"/>
    </source>
</evidence>
<sequence length="236" mass="25957">MTVNALLLSSSRVGDTPYLSHAIPFIKPLTADAQKWIFIPYAGVSMNYDTYLASVVTGLSELKLDISGIHQHPDPRQALKDADGILIGGGNTFHLLHELYKYDLVQLIREEVLKGKPYIGWSAGSNVSGLSIRTTNDMPIIEPPSFAALNILPFQLNPHYSNYRAPGHNGETRAQRLLEFTRVDPITPVIGIVEGSALWRQGETLSLLGENPAYLFCGEQQEIPIPVGSDLSHLLK</sequence>
<name>PEPE_SHEON</name>
<gene>
    <name evidence="1" type="primary">pepE</name>
    <name type="ordered locus">SO_2730</name>
</gene>